<keyword id="KW-0010">Activator</keyword>
<keyword id="KW-0158">Chromosome</keyword>
<keyword id="KW-0539">Nucleus</keyword>
<keyword id="KW-1185">Reference proteome</keyword>
<keyword id="KW-0779">Telomere</keyword>
<keyword id="KW-0804">Transcription</keyword>
<keyword id="KW-0805">Transcription regulation</keyword>
<keyword id="KW-0819">tRNA processing</keyword>
<evidence type="ECO:0000250" key="1"/>
<evidence type="ECO:0000305" key="2"/>
<reference key="1">
    <citation type="journal article" date="2004" name="Nature">
        <title>Genome evolution in yeasts.</title>
        <authorList>
            <person name="Dujon B."/>
            <person name="Sherman D."/>
            <person name="Fischer G."/>
            <person name="Durrens P."/>
            <person name="Casaregola S."/>
            <person name="Lafontaine I."/>
            <person name="de Montigny J."/>
            <person name="Marck C."/>
            <person name="Neuveglise C."/>
            <person name="Talla E."/>
            <person name="Goffard N."/>
            <person name="Frangeul L."/>
            <person name="Aigle M."/>
            <person name="Anthouard V."/>
            <person name="Babour A."/>
            <person name="Barbe V."/>
            <person name="Barnay S."/>
            <person name="Blanchin S."/>
            <person name="Beckerich J.-M."/>
            <person name="Beyne E."/>
            <person name="Bleykasten C."/>
            <person name="Boisrame A."/>
            <person name="Boyer J."/>
            <person name="Cattolico L."/>
            <person name="Confanioleri F."/>
            <person name="de Daruvar A."/>
            <person name="Despons L."/>
            <person name="Fabre E."/>
            <person name="Fairhead C."/>
            <person name="Ferry-Dumazet H."/>
            <person name="Groppi A."/>
            <person name="Hantraye F."/>
            <person name="Hennequin C."/>
            <person name="Jauniaux N."/>
            <person name="Joyet P."/>
            <person name="Kachouri R."/>
            <person name="Kerrest A."/>
            <person name="Koszul R."/>
            <person name="Lemaire M."/>
            <person name="Lesur I."/>
            <person name="Ma L."/>
            <person name="Muller H."/>
            <person name="Nicaud J.-M."/>
            <person name="Nikolski M."/>
            <person name="Oztas S."/>
            <person name="Ozier-Kalogeropoulos O."/>
            <person name="Pellenz S."/>
            <person name="Potier S."/>
            <person name="Richard G.-F."/>
            <person name="Straub M.-L."/>
            <person name="Suleau A."/>
            <person name="Swennen D."/>
            <person name="Tekaia F."/>
            <person name="Wesolowski-Louvel M."/>
            <person name="Westhof E."/>
            <person name="Wirth B."/>
            <person name="Zeniou-Meyer M."/>
            <person name="Zivanovic Y."/>
            <person name="Bolotin-Fukuhara M."/>
            <person name="Thierry A."/>
            <person name="Bouchier C."/>
            <person name="Caudron B."/>
            <person name="Scarpelli C."/>
            <person name="Gaillardin C."/>
            <person name="Weissenbach J."/>
            <person name="Wincker P."/>
            <person name="Souciet J.-L."/>
        </authorList>
    </citation>
    <scope>NUCLEOTIDE SEQUENCE [LARGE SCALE GENOMIC DNA]</scope>
    <source>
        <strain>ATCC 2001 / BCRC 20586 / JCM 3761 / NBRC 0622 / NRRL Y-65 / CBS 138</strain>
    </source>
</reference>
<organism>
    <name type="scientific">Candida glabrata (strain ATCC 2001 / BCRC 20586 / JCM 3761 / NBRC 0622 / NRRL Y-65 / CBS 138)</name>
    <name type="common">Yeast</name>
    <name type="synonym">Nakaseomyces glabratus</name>
    <dbReference type="NCBI Taxonomy" id="284593"/>
    <lineage>
        <taxon>Eukaryota</taxon>
        <taxon>Fungi</taxon>
        <taxon>Dikarya</taxon>
        <taxon>Ascomycota</taxon>
        <taxon>Saccharomycotina</taxon>
        <taxon>Saccharomycetes</taxon>
        <taxon>Saccharomycetales</taxon>
        <taxon>Saccharomycetaceae</taxon>
        <taxon>Nakaseomyces</taxon>
    </lineage>
</organism>
<accession>Q6FUH3</accession>
<feature type="chain" id="PRO_0000278921" description="EKC/KEOPS complex subunit GON7">
    <location>
        <begin position="1"/>
        <end position="112"/>
    </location>
</feature>
<comment type="function">
    <text evidence="1">Component of the EKC/KEOPS complex that is required for the formation of a threonylcarbamoyl group on adenosine at position 37 (t(6)A37) in tRNAs that read codons beginning with adenine. The complex is probably involved in the transfer of the threonylcarbamoyl moiety of threonylcarbamoyl-AMP (TC-AMP) to the N6 group of A37. GON7 likely plays a supporting role to the catalytic subunit KAE1 in the complex. The EKC/KEOPS complex also promotes both telomere uncapping and telomere elongation. The complex is required for efficient recruitment of transcriptional coactivators (By similarity).</text>
</comment>
<comment type="subunit">
    <text evidence="1">Component of the EKC/KEOPS complex composed of at least BUD32, CGI121, GON7, KAE1 and PCC1; the whole complex dimerizes.</text>
</comment>
<comment type="subcellular location">
    <subcellularLocation>
        <location evidence="1">Nucleus</location>
    </subcellularLocation>
    <subcellularLocation>
        <location evidence="1">Chromosome</location>
        <location evidence="1">Telomere</location>
    </subcellularLocation>
</comment>
<comment type="similarity">
    <text evidence="2">Belongs to the GON7 family.</text>
</comment>
<proteinExistence type="inferred from homology"/>
<name>GON7_CANGA</name>
<gene>
    <name type="primary">GON7</name>
    <name type="ordered locus">CAGL0F03487g</name>
</gene>
<dbReference type="EMBL" id="CR380952">
    <property type="protein sequence ID" value="CAG59045.1"/>
    <property type="molecule type" value="Genomic_DNA"/>
</dbReference>
<dbReference type="RefSeq" id="XP_446121.1">
    <property type="nucleotide sequence ID" value="XM_446121.1"/>
</dbReference>
<dbReference type="SMR" id="Q6FUH3"/>
<dbReference type="FunCoup" id="Q6FUH3">
    <property type="interactions" value="38"/>
</dbReference>
<dbReference type="STRING" id="284593.Q6FUH3"/>
<dbReference type="EnsemblFungi" id="CAGL0F03487g-T">
    <property type="protein sequence ID" value="CAGL0F03487g-T-p1"/>
    <property type="gene ID" value="CAGL0F03487g"/>
</dbReference>
<dbReference type="KEGG" id="cgr:2887651"/>
<dbReference type="CGD" id="CAL0131372">
    <property type="gene designation" value="CAGL0F03487g"/>
</dbReference>
<dbReference type="VEuPathDB" id="FungiDB:B1J91_F03487g"/>
<dbReference type="VEuPathDB" id="FungiDB:CAGL0F03487g"/>
<dbReference type="eggNOG" id="ENOG502S429">
    <property type="taxonomic scope" value="Eukaryota"/>
</dbReference>
<dbReference type="HOGENOM" id="CLU_151420_1_0_1"/>
<dbReference type="InParanoid" id="Q6FUH3"/>
<dbReference type="OMA" id="QDHLNIF"/>
<dbReference type="Proteomes" id="UP000002428">
    <property type="component" value="Chromosome F"/>
</dbReference>
<dbReference type="GO" id="GO:0000785">
    <property type="term" value="C:chromatin"/>
    <property type="evidence" value="ECO:0007669"/>
    <property type="project" value="EnsemblFungi"/>
</dbReference>
<dbReference type="GO" id="GO:0000781">
    <property type="term" value="C:chromosome, telomeric region"/>
    <property type="evidence" value="ECO:0007669"/>
    <property type="project" value="UniProtKB-SubCell"/>
</dbReference>
<dbReference type="GO" id="GO:0000408">
    <property type="term" value="C:EKC/KEOPS complex"/>
    <property type="evidence" value="ECO:0007669"/>
    <property type="project" value="EnsemblFungi"/>
</dbReference>
<dbReference type="GO" id="GO:0005634">
    <property type="term" value="C:nucleus"/>
    <property type="evidence" value="ECO:0007669"/>
    <property type="project" value="UniProtKB-SubCell"/>
</dbReference>
<dbReference type="GO" id="GO:0031490">
    <property type="term" value="F:chromatin DNA binding"/>
    <property type="evidence" value="ECO:0007669"/>
    <property type="project" value="EnsemblFungi"/>
</dbReference>
<dbReference type="GO" id="GO:0000032">
    <property type="term" value="P:cell wall mannoprotein biosynthetic process"/>
    <property type="evidence" value="ECO:0007669"/>
    <property type="project" value="EnsemblFungi"/>
</dbReference>
<dbReference type="GO" id="GO:0045944">
    <property type="term" value="P:positive regulation of transcription by RNA polymerase II"/>
    <property type="evidence" value="ECO:0007669"/>
    <property type="project" value="EnsemblFungi"/>
</dbReference>
<dbReference type="GO" id="GO:0000722">
    <property type="term" value="P:telomere maintenance via recombination"/>
    <property type="evidence" value="ECO:0007669"/>
    <property type="project" value="EnsemblFungi"/>
</dbReference>
<dbReference type="GO" id="GO:0008033">
    <property type="term" value="P:tRNA processing"/>
    <property type="evidence" value="ECO:0007669"/>
    <property type="project" value="UniProtKB-KW"/>
</dbReference>
<dbReference type="InterPro" id="IPR014849">
    <property type="entry name" value="EKC/KEOPS_Gon7"/>
</dbReference>
<dbReference type="Pfam" id="PF08738">
    <property type="entry name" value="Gon7"/>
    <property type="match status" value="1"/>
</dbReference>
<protein>
    <recommendedName>
        <fullName>EKC/KEOPS complex subunit GON7</fullName>
    </recommendedName>
</protein>
<sequence>MELCAEYVSPDQRRSFVAGPHGTTDGVTTGPSAYVLNAGQVDRDRPAEARSVAGKVTYLGQLRNQLTGLQDDINEYLTLRMEAAKSKKLKTADEQRIEKEINTLLDGGDDEE</sequence>